<feature type="chain" id="PRO_0000073552" description="Calglandulin">
    <location>
        <begin position="1"/>
        <end position="156"/>
    </location>
</feature>
<feature type="domain" description="EF-hand 1" evidence="2">
    <location>
        <begin position="8"/>
        <end position="43"/>
    </location>
</feature>
<feature type="domain" description="EF-hand 2" evidence="2">
    <location>
        <begin position="44"/>
        <end position="79"/>
    </location>
</feature>
<feature type="domain" description="EF-hand 3" evidence="2">
    <location>
        <begin position="82"/>
        <end position="117"/>
    </location>
</feature>
<feature type="domain" description="EF-hand 4" evidence="2">
    <location>
        <begin position="118"/>
        <end position="153"/>
    </location>
</feature>
<feature type="binding site" evidence="2">
    <location>
        <position position="131"/>
    </location>
    <ligand>
        <name>Ca(2+)</name>
        <dbReference type="ChEBI" id="CHEBI:29108"/>
    </ligand>
</feature>
<feature type="binding site" evidence="2">
    <location>
        <position position="133"/>
    </location>
    <ligand>
        <name>Ca(2+)</name>
        <dbReference type="ChEBI" id="CHEBI:29108"/>
    </ligand>
</feature>
<feature type="binding site" evidence="2">
    <location>
        <position position="135"/>
    </location>
    <ligand>
        <name>Ca(2+)</name>
        <dbReference type="ChEBI" id="CHEBI:29108"/>
    </ligand>
</feature>
<feature type="binding site" evidence="2">
    <location>
        <position position="137"/>
    </location>
    <ligand>
        <name>Ca(2+)</name>
        <dbReference type="ChEBI" id="CHEBI:29108"/>
    </ligand>
</feature>
<feature type="binding site" evidence="2">
    <location>
        <position position="142"/>
    </location>
    <ligand>
        <name>Ca(2+)</name>
        <dbReference type="ChEBI" id="CHEBI:29108"/>
    </ligand>
</feature>
<accession>Q3SB14</accession>
<dbReference type="EMBL" id="DQ084028">
    <property type="protein sequence ID" value="AAZ38973.1"/>
    <property type="molecule type" value="mRNA"/>
</dbReference>
<dbReference type="SMR" id="Q3SB14"/>
<dbReference type="GO" id="GO:0005737">
    <property type="term" value="C:cytoplasm"/>
    <property type="evidence" value="ECO:0007669"/>
    <property type="project" value="UniProtKB-SubCell"/>
</dbReference>
<dbReference type="GO" id="GO:0016460">
    <property type="term" value="C:myosin II complex"/>
    <property type="evidence" value="ECO:0007669"/>
    <property type="project" value="TreeGrafter"/>
</dbReference>
<dbReference type="GO" id="GO:0005509">
    <property type="term" value="F:calcium ion binding"/>
    <property type="evidence" value="ECO:0007669"/>
    <property type="project" value="InterPro"/>
</dbReference>
<dbReference type="CDD" id="cd00051">
    <property type="entry name" value="EFh"/>
    <property type="match status" value="1"/>
</dbReference>
<dbReference type="FunFam" id="1.10.238.10:FF:000163">
    <property type="entry name" value="Calmodulin like 6"/>
    <property type="match status" value="1"/>
</dbReference>
<dbReference type="Gene3D" id="1.10.238.10">
    <property type="entry name" value="EF-hand"/>
    <property type="match status" value="2"/>
</dbReference>
<dbReference type="InterPro" id="IPR050230">
    <property type="entry name" value="CALM/Myosin/TropC-like"/>
</dbReference>
<dbReference type="InterPro" id="IPR011992">
    <property type="entry name" value="EF-hand-dom_pair"/>
</dbReference>
<dbReference type="InterPro" id="IPR018247">
    <property type="entry name" value="EF_Hand_1_Ca_BS"/>
</dbReference>
<dbReference type="InterPro" id="IPR002048">
    <property type="entry name" value="EF_hand_dom"/>
</dbReference>
<dbReference type="PANTHER" id="PTHR23048:SF56">
    <property type="entry name" value="CALMODULIN 2"/>
    <property type="match status" value="1"/>
</dbReference>
<dbReference type="PANTHER" id="PTHR23048">
    <property type="entry name" value="MYOSIN LIGHT CHAIN 1, 3"/>
    <property type="match status" value="1"/>
</dbReference>
<dbReference type="Pfam" id="PF13499">
    <property type="entry name" value="EF-hand_7"/>
    <property type="match status" value="1"/>
</dbReference>
<dbReference type="Pfam" id="PF13833">
    <property type="entry name" value="EF-hand_8"/>
    <property type="match status" value="1"/>
</dbReference>
<dbReference type="SMART" id="SM00054">
    <property type="entry name" value="EFh"/>
    <property type="match status" value="4"/>
</dbReference>
<dbReference type="SUPFAM" id="SSF47473">
    <property type="entry name" value="EF-hand"/>
    <property type="match status" value="1"/>
</dbReference>
<dbReference type="PROSITE" id="PS00018">
    <property type="entry name" value="EF_HAND_1"/>
    <property type="match status" value="1"/>
</dbReference>
<dbReference type="PROSITE" id="PS50222">
    <property type="entry name" value="EF_HAND_2"/>
    <property type="match status" value="4"/>
</dbReference>
<proteinExistence type="evidence at transcript level"/>
<comment type="function">
    <text evidence="1">May be involved in the cellular control mechanism of the secretion of toxins from the gland into the venom.</text>
</comment>
<comment type="subcellular location">
    <subcellularLocation>
        <location evidence="3">Cytoplasm</location>
    </subcellularLocation>
    <text evidence="1">Not found in venom.</text>
</comment>
<comment type="tissue specificity">
    <text>Expressed by the venom gland.</text>
</comment>
<comment type="similarity">
    <text evidence="3">Belongs to the calmodulin family. Calglandulin subfamily.</text>
</comment>
<protein>
    <recommendedName>
        <fullName>Calglandulin</fullName>
    </recommendedName>
</protein>
<organism>
    <name type="scientific">Oxyuranus microlepidotus</name>
    <name type="common">Inland taipan</name>
    <name type="synonym">Diemenia microlepidota</name>
    <dbReference type="NCBI Taxonomy" id="111177"/>
    <lineage>
        <taxon>Eukaryota</taxon>
        <taxon>Metazoa</taxon>
        <taxon>Chordata</taxon>
        <taxon>Craniata</taxon>
        <taxon>Vertebrata</taxon>
        <taxon>Euteleostomi</taxon>
        <taxon>Lepidosauria</taxon>
        <taxon>Squamata</taxon>
        <taxon>Bifurcata</taxon>
        <taxon>Unidentata</taxon>
        <taxon>Episquamata</taxon>
        <taxon>Toxicofera</taxon>
        <taxon>Serpentes</taxon>
        <taxon>Colubroidea</taxon>
        <taxon>Elapidae</taxon>
        <taxon>Hydrophiinae</taxon>
        <taxon>Oxyuranus</taxon>
    </lineage>
</organism>
<name>CALGL_OXYMI</name>
<reference key="1">
    <citation type="journal article" date="2005" name="Cell. Mol. Life Sci.">
        <title>Identification and analysis of venom gland-specific genes from the coastal taipan (Oxyuranus scutellatus) and related species.</title>
        <authorList>
            <person name="St Pierre L."/>
            <person name="Woods R."/>
            <person name="Earl S.T.H."/>
            <person name="Masci P.P."/>
            <person name="Lavin M.F."/>
        </authorList>
    </citation>
    <scope>NUCLEOTIDE SEQUENCE [MRNA]</scope>
    <source>
        <tissue>Venom gland</tissue>
    </source>
</reference>
<evidence type="ECO:0000250" key="1"/>
<evidence type="ECO:0000255" key="2">
    <source>
        <dbReference type="PROSITE-ProRule" id="PRU00448"/>
    </source>
</evidence>
<evidence type="ECO:0000305" key="3"/>
<keyword id="KW-0106">Calcium</keyword>
<keyword id="KW-0963">Cytoplasm</keyword>
<keyword id="KW-0479">Metal-binding</keyword>
<keyword id="KW-0677">Repeat</keyword>
<sequence>MAATLTPEQITEYKGIFEMFDEEGNGLVKTDDLESLMSLIGINPTKRDLANMAKDVDKDKKGTFNCDGFLVLMGIYHEKSKNQDEELRAAFKVFDKEHKGYIEWDTLKYVLMNAGEPLNEHEAELMMKEADKDGDGTIDYEEFVAMMTGESFKLTQ</sequence>